<comment type="function">
    <text evidence="1">Functions in the biosynthesis of branched-chain amino acids. Catalyzes the dehydration of (2R,3R)-2,3-dihydroxy-3-methylpentanoate (2,3-dihydroxy-3-methylvalerate) into 2-oxo-3-methylpentanoate (2-oxo-3-methylvalerate) and of (2R)-2,3-dihydroxy-3-methylbutanoate (2,3-dihydroxyisovalerate) into 2-oxo-3-methylbutanoate (2-oxoisovalerate), the penultimate precursor to L-isoleucine and L-valine, respectively.</text>
</comment>
<comment type="catalytic activity">
    <reaction evidence="1">
        <text>(2R)-2,3-dihydroxy-3-methylbutanoate = 3-methyl-2-oxobutanoate + H2O</text>
        <dbReference type="Rhea" id="RHEA:24809"/>
        <dbReference type="ChEBI" id="CHEBI:11851"/>
        <dbReference type="ChEBI" id="CHEBI:15377"/>
        <dbReference type="ChEBI" id="CHEBI:49072"/>
        <dbReference type="EC" id="4.2.1.9"/>
    </reaction>
    <physiologicalReaction direction="left-to-right" evidence="1">
        <dbReference type="Rhea" id="RHEA:24810"/>
    </physiologicalReaction>
</comment>
<comment type="catalytic activity">
    <reaction evidence="1">
        <text>(2R,3R)-2,3-dihydroxy-3-methylpentanoate = (S)-3-methyl-2-oxopentanoate + H2O</text>
        <dbReference type="Rhea" id="RHEA:27694"/>
        <dbReference type="ChEBI" id="CHEBI:15377"/>
        <dbReference type="ChEBI" id="CHEBI:35146"/>
        <dbReference type="ChEBI" id="CHEBI:49258"/>
        <dbReference type="EC" id="4.2.1.9"/>
    </reaction>
    <physiologicalReaction direction="left-to-right" evidence="1">
        <dbReference type="Rhea" id="RHEA:27695"/>
    </physiologicalReaction>
</comment>
<comment type="cofactor">
    <cofactor evidence="1">
        <name>[2Fe-2S] cluster</name>
        <dbReference type="ChEBI" id="CHEBI:190135"/>
    </cofactor>
    <text evidence="1">Binds 1 [2Fe-2S] cluster per subunit. This cluster acts as a Lewis acid cofactor.</text>
</comment>
<comment type="cofactor">
    <cofactor evidence="1">
        <name>Mg(2+)</name>
        <dbReference type="ChEBI" id="CHEBI:18420"/>
    </cofactor>
</comment>
<comment type="pathway">
    <text evidence="1">Amino-acid biosynthesis; L-isoleucine biosynthesis; L-isoleucine from 2-oxobutanoate: step 3/4.</text>
</comment>
<comment type="pathway">
    <text evidence="1">Amino-acid biosynthesis; L-valine biosynthesis; L-valine from pyruvate: step 3/4.</text>
</comment>
<comment type="subunit">
    <text evidence="1">Homodimer.</text>
</comment>
<comment type="similarity">
    <text evidence="1">Belongs to the IlvD/Edd family.</text>
</comment>
<protein>
    <recommendedName>
        <fullName evidence="1">Dihydroxy-acid dehydratase</fullName>
        <shortName evidence="1">DAD</shortName>
        <ecNumber evidence="1">4.2.1.9</ecNumber>
    </recommendedName>
</protein>
<sequence length="560" mass="59402">MGDNLKKRSSMTTDGDNRAPNRAMLRAVGFTDEDFHKPMIGIASTWSEITPCNIHINKLAEKVKEGVREAGGVPQIYGTITVSDGIMMGHEGMHFSLPSREVIADSIEIVSNAMRHDGVIAIGGCDKNMPGCLMALCRIDAPSIFVYGGTILPGNCDGQDVDIVSIFEAVGKFNAGKISREEFIRIEQNAIPGAGSCGGMYTANTMSSAIEALGMSLPGSASMPAVSSRKANDCYEAGKALINLIQKGITPKQILTKKAFENAITVVLVLGGSTNAVLHLIAIAKEIGVGLTLDDFDRISKKTPHLADLKPGGKYAMTDLDKVGGVHGVMKYLLKEGMLHGDCLTVTGKTIAENLKDMPDLVPNQTIVRKKSEALHPSGPLVILKGNLAPDGAVAKISGLKKISITGPAKVFESEDDCFNAIMTDKIKPGDVIIIRYEGPKGGPGMREMLAVTSALVGKGLGEDVGLMTDGRFSGGTHGLVVGHISPEAFDGGPIAIVQNGDKVTIDSSKNLLQVEISQEEIDKRLKSWKPIEPRYKTGVLAKYVKLVQSATNGAITNLL</sequence>
<dbReference type="EC" id="4.2.1.9" evidence="1"/>
<dbReference type="EMBL" id="AE010300">
    <property type="protein sequence ID" value="AAN50157.1"/>
    <property type="molecule type" value="Genomic_DNA"/>
</dbReference>
<dbReference type="RefSeq" id="NP_713139.1">
    <property type="nucleotide sequence ID" value="NC_004342.2"/>
</dbReference>
<dbReference type="RefSeq" id="WP_000502719.1">
    <property type="nucleotide sequence ID" value="NC_004342.2"/>
</dbReference>
<dbReference type="SMR" id="Q8F219"/>
<dbReference type="FunCoup" id="Q8F219">
    <property type="interactions" value="442"/>
</dbReference>
<dbReference type="STRING" id="189518.LA_2959"/>
<dbReference type="PaxDb" id="189518-LA_2959"/>
<dbReference type="EnsemblBacteria" id="AAN50157">
    <property type="protein sequence ID" value="AAN50157"/>
    <property type="gene ID" value="LA_2959"/>
</dbReference>
<dbReference type="KEGG" id="lil:LA_2959"/>
<dbReference type="PATRIC" id="fig|189518.3.peg.2938"/>
<dbReference type="HOGENOM" id="CLU_014271_4_2_12"/>
<dbReference type="InParanoid" id="Q8F219"/>
<dbReference type="OrthoDB" id="9807077at2"/>
<dbReference type="UniPathway" id="UPA00047">
    <property type="reaction ID" value="UER00057"/>
</dbReference>
<dbReference type="UniPathway" id="UPA00049">
    <property type="reaction ID" value="UER00061"/>
</dbReference>
<dbReference type="Proteomes" id="UP000001408">
    <property type="component" value="Chromosome I"/>
</dbReference>
<dbReference type="GO" id="GO:0051537">
    <property type="term" value="F:2 iron, 2 sulfur cluster binding"/>
    <property type="evidence" value="ECO:0007669"/>
    <property type="project" value="UniProtKB-UniRule"/>
</dbReference>
<dbReference type="GO" id="GO:0004160">
    <property type="term" value="F:dihydroxy-acid dehydratase activity"/>
    <property type="evidence" value="ECO:0000318"/>
    <property type="project" value="GO_Central"/>
</dbReference>
<dbReference type="GO" id="GO:0000287">
    <property type="term" value="F:magnesium ion binding"/>
    <property type="evidence" value="ECO:0007669"/>
    <property type="project" value="UniProtKB-UniRule"/>
</dbReference>
<dbReference type="GO" id="GO:0009082">
    <property type="term" value="P:branched-chain amino acid biosynthetic process"/>
    <property type="evidence" value="ECO:0000318"/>
    <property type="project" value="GO_Central"/>
</dbReference>
<dbReference type="GO" id="GO:0009097">
    <property type="term" value="P:isoleucine biosynthetic process"/>
    <property type="evidence" value="ECO:0007669"/>
    <property type="project" value="UniProtKB-UniRule"/>
</dbReference>
<dbReference type="GO" id="GO:0009099">
    <property type="term" value="P:L-valine biosynthetic process"/>
    <property type="evidence" value="ECO:0007669"/>
    <property type="project" value="UniProtKB-UniRule"/>
</dbReference>
<dbReference type="FunFam" id="3.50.30.80:FF:000001">
    <property type="entry name" value="Dihydroxy-acid dehydratase"/>
    <property type="match status" value="1"/>
</dbReference>
<dbReference type="Gene3D" id="3.50.30.80">
    <property type="entry name" value="IlvD/EDD C-terminal domain-like"/>
    <property type="match status" value="1"/>
</dbReference>
<dbReference type="HAMAP" id="MF_00012">
    <property type="entry name" value="IlvD"/>
    <property type="match status" value="1"/>
</dbReference>
<dbReference type="InterPro" id="IPR050165">
    <property type="entry name" value="DHAD_IlvD/Edd"/>
</dbReference>
<dbReference type="InterPro" id="IPR042096">
    <property type="entry name" value="Dihydro-acid_dehy_C"/>
</dbReference>
<dbReference type="InterPro" id="IPR004404">
    <property type="entry name" value="DihydroxyA_deHydtase"/>
</dbReference>
<dbReference type="InterPro" id="IPR020558">
    <property type="entry name" value="DiOHA_6PGluconate_deHydtase_CS"/>
</dbReference>
<dbReference type="InterPro" id="IPR056740">
    <property type="entry name" value="ILV_EDD_C"/>
</dbReference>
<dbReference type="InterPro" id="IPR000581">
    <property type="entry name" value="ILV_EDD_N"/>
</dbReference>
<dbReference type="InterPro" id="IPR037237">
    <property type="entry name" value="IlvD/EDD_N"/>
</dbReference>
<dbReference type="NCBIfam" id="TIGR00110">
    <property type="entry name" value="ilvD"/>
    <property type="match status" value="1"/>
</dbReference>
<dbReference type="NCBIfam" id="NF002068">
    <property type="entry name" value="PRK00911.1"/>
    <property type="match status" value="1"/>
</dbReference>
<dbReference type="PANTHER" id="PTHR21000">
    <property type="entry name" value="DIHYDROXY-ACID DEHYDRATASE DAD"/>
    <property type="match status" value="1"/>
</dbReference>
<dbReference type="PANTHER" id="PTHR21000:SF5">
    <property type="entry name" value="DIHYDROXY-ACID DEHYDRATASE, MITOCHONDRIAL"/>
    <property type="match status" value="1"/>
</dbReference>
<dbReference type="Pfam" id="PF24877">
    <property type="entry name" value="ILV_EDD_C"/>
    <property type="match status" value="1"/>
</dbReference>
<dbReference type="Pfam" id="PF00920">
    <property type="entry name" value="ILVD_EDD_N"/>
    <property type="match status" value="1"/>
</dbReference>
<dbReference type="SUPFAM" id="SSF143975">
    <property type="entry name" value="IlvD/EDD N-terminal domain-like"/>
    <property type="match status" value="1"/>
</dbReference>
<dbReference type="SUPFAM" id="SSF52016">
    <property type="entry name" value="LeuD/IlvD-like"/>
    <property type="match status" value="1"/>
</dbReference>
<dbReference type="PROSITE" id="PS00886">
    <property type="entry name" value="ILVD_EDD_1"/>
    <property type="match status" value="1"/>
</dbReference>
<dbReference type="PROSITE" id="PS00887">
    <property type="entry name" value="ILVD_EDD_2"/>
    <property type="match status" value="1"/>
</dbReference>
<keyword id="KW-0001">2Fe-2S</keyword>
<keyword id="KW-0028">Amino-acid biosynthesis</keyword>
<keyword id="KW-0100">Branched-chain amino acid biosynthesis</keyword>
<keyword id="KW-0408">Iron</keyword>
<keyword id="KW-0411">Iron-sulfur</keyword>
<keyword id="KW-0456">Lyase</keyword>
<keyword id="KW-0460">Magnesium</keyword>
<keyword id="KW-0479">Metal-binding</keyword>
<keyword id="KW-1185">Reference proteome</keyword>
<organism>
    <name type="scientific">Leptospira interrogans serogroup Icterohaemorrhagiae serovar Lai (strain 56601)</name>
    <dbReference type="NCBI Taxonomy" id="189518"/>
    <lineage>
        <taxon>Bacteria</taxon>
        <taxon>Pseudomonadati</taxon>
        <taxon>Spirochaetota</taxon>
        <taxon>Spirochaetia</taxon>
        <taxon>Leptospirales</taxon>
        <taxon>Leptospiraceae</taxon>
        <taxon>Leptospira</taxon>
    </lineage>
</organism>
<accession>Q8F219</accession>
<reference key="1">
    <citation type="journal article" date="2003" name="Nature">
        <title>Unique physiological and pathogenic features of Leptospira interrogans revealed by whole-genome sequencing.</title>
        <authorList>
            <person name="Ren S.-X."/>
            <person name="Fu G."/>
            <person name="Jiang X.-G."/>
            <person name="Zeng R."/>
            <person name="Miao Y.-G."/>
            <person name="Xu H."/>
            <person name="Zhang Y.-X."/>
            <person name="Xiong H."/>
            <person name="Lu G."/>
            <person name="Lu L.-F."/>
            <person name="Jiang H.-Q."/>
            <person name="Jia J."/>
            <person name="Tu Y.-F."/>
            <person name="Jiang J.-X."/>
            <person name="Gu W.-Y."/>
            <person name="Zhang Y.-Q."/>
            <person name="Cai Z."/>
            <person name="Sheng H.-H."/>
            <person name="Yin H.-F."/>
            <person name="Zhang Y."/>
            <person name="Zhu G.-F."/>
            <person name="Wan M."/>
            <person name="Huang H.-L."/>
            <person name="Qian Z."/>
            <person name="Wang S.-Y."/>
            <person name="Ma W."/>
            <person name="Yao Z.-J."/>
            <person name="Shen Y."/>
            <person name="Qiang B.-Q."/>
            <person name="Xia Q.-C."/>
            <person name="Guo X.-K."/>
            <person name="Danchin A."/>
            <person name="Saint Girons I."/>
            <person name="Somerville R.L."/>
            <person name="Wen Y.-M."/>
            <person name="Shi M.-H."/>
            <person name="Chen Z."/>
            <person name="Xu J.-G."/>
            <person name="Zhao G.-P."/>
        </authorList>
    </citation>
    <scope>NUCLEOTIDE SEQUENCE [LARGE SCALE GENOMIC DNA]</scope>
    <source>
        <strain>56601</strain>
    </source>
</reference>
<name>ILVD_LEPIN</name>
<proteinExistence type="inferred from homology"/>
<gene>
    <name evidence="1" type="primary">ilvD</name>
    <name type="ordered locus">LA_2959</name>
</gene>
<feature type="chain" id="PRO_0000103475" description="Dihydroxy-acid dehydratase">
    <location>
        <begin position="1"/>
        <end position="560"/>
    </location>
</feature>
<feature type="region of interest" description="Disordered" evidence="2">
    <location>
        <begin position="1"/>
        <end position="20"/>
    </location>
</feature>
<feature type="active site" description="Proton acceptor" evidence="1">
    <location>
        <position position="474"/>
    </location>
</feature>
<feature type="binding site" evidence="1">
    <location>
        <position position="52"/>
    </location>
    <ligand>
        <name>[2Fe-2S] cluster</name>
        <dbReference type="ChEBI" id="CHEBI:190135"/>
    </ligand>
</feature>
<feature type="binding site" evidence="1">
    <location>
        <position position="84"/>
    </location>
    <ligand>
        <name>Mg(2+)</name>
        <dbReference type="ChEBI" id="CHEBI:18420"/>
    </ligand>
</feature>
<feature type="binding site" evidence="1">
    <location>
        <position position="125"/>
    </location>
    <ligand>
        <name>[2Fe-2S] cluster</name>
        <dbReference type="ChEBI" id="CHEBI:190135"/>
    </ligand>
</feature>
<feature type="binding site" evidence="1">
    <location>
        <position position="126"/>
    </location>
    <ligand>
        <name>Mg(2+)</name>
        <dbReference type="ChEBI" id="CHEBI:18420"/>
    </ligand>
</feature>
<feature type="binding site" description="via carbamate group" evidence="1">
    <location>
        <position position="127"/>
    </location>
    <ligand>
        <name>Mg(2+)</name>
        <dbReference type="ChEBI" id="CHEBI:18420"/>
    </ligand>
</feature>
<feature type="binding site" evidence="1">
    <location>
        <position position="197"/>
    </location>
    <ligand>
        <name>[2Fe-2S] cluster</name>
        <dbReference type="ChEBI" id="CHEBI:190135"/>
    </ligand>
</feature>
<feature type="binding site" evidence="1">
    <location>
        <position position="448"/>
    </location>
    <ligand>
        <name>Mg(2+)</name>
        <dbReference type="ChEBI" id="CHEBI:18420"/>
    </ligand>
</feature>
<feature type="modified residue" description="N6-carboxylysine" evidence="1">
    <location>
        <position position="127"/>
    </location>
</feature>
<evidence type="ECO:0000255" key="1">
    <source>
        <dbReference type="HAMAP-Rule" id="MF_00012"/>
    </source>
</evidence>
<evidence type="ECO:0000256" key="2">
    <source>
        <dbReference type="SAM" id="MobiDB-lite"/>
    </source>
</evidence>